<dbReference type="EMBL" id="Y09927">
    <property type="protein sequence ID" value="CAB55331.1"/>
    <property type="molecule type" value="Genomic_DNA"/>
</dbReference>
<dbReference type="EMBL" id="CP000046">
    <property type="protein sequence ID" value="AAW38456.1"/>
    <property type="molecule type" value="Genomic_DNA"/>
</dbReference>
<dbReference type="RefSeq" id="WP_001292149.1">
    <property type="nucleotide sequence ID" value="NZ_JBGOFO010000007.1"/>
</dbReference>
<dbReference type="SMR" id="Q5HE46"/>
<dbReference type="KEGG" id="sac:SACOL2148"/>
<dbReference type="HOGENOM" id="CLU_072531_3_0_9"/>
<dbReference type="Proteomes" id="UP000000530">
    <property type="component" value="Chromosome"/>
</dbReference>
<dbReference type="GO" id="GO:0005737">
    <property type="term" value="C:cytoplasm"/>
    <property type="evidence" value="ECO:0007669"/>
    <property type="project" value="UniProtKB-SubCell"/>
</dbReference>
<dbReference type="GO" id="GO:0005886">
    <property type="term" value="C:plasma membrane"/>
    <property type="evidence" value="ECO:0007669"/>
    <property type="project" value="TreeGrafter"/>
</dbReference>
<dbReference type="GO" id="GO:0016301">
    <property type="term" value="F:kinase activity"/>
    <property type="evidence" value="ECO:0007669"/>
    <property type="project" value="UniProtKB-KW"/>
</dbReference>
<dbReference type="GO" id="GO:0090563">
    <property type="term" value="F:protein-phosphocysteine-sugar phosphotransferase activity"/>
    <property type="evidence" value="ECO:0007669"/>
    <property type="project" value="TreeGrafter"/>
</dbReference>
<dbReference type="GO" id="GO:0009401">
    <property type="term" value="P:phosphoenolpyruvate-dependent sugar phosphotransferase system"/>
    <property type="evidence" value="ECO:0007669"/>
    <property type="project" value="UniProtKB-KW"/>
</dbReference>
<dbReference type="CDD" id="cd00211">
    <property type="entry name" value="PTS_IIA_fru"/>
    <property type="match status" value="1"/>
</dbReference>
<dbReference type="Gene3D" id="3.40.930.10">
    <property type="entry name" value="Mannitol-specific EII, Chain A"/>
    <property type="match status" value="1"/>
</dbReference>
<dbReference type="InterPro" id="IPR016152">
    <property type="entry name" value="PTrfase/Anion_transptr"/>
</dbReference>
<dbReference type="InterPro" id="IPR002178">
    <property type="entry name" value="PTS_EIIA_type-2_dom"/>
</dbReference>
<dbReference type="InterPro" id="IPR050893">
    <property type="entry name" value="Sugar_PTS"/>
</dbReference>
<dbReference type="PANTHER" id="PTHR30181">
    <property type="entry name" value="MANNITOL PERMEASE IIC COMPONENT"/>
    <property type="match status" value="1"/>
</dbReference>
<dbReference type="PANTHER" id="PTHR30181:SF2">
    <property type="entry name" value="PTS SYSTEM MANNITOL-SPECIFIC EIICBA COMPONENT"/>
    <property type="match status" value="1"/>
</dbReference>
<dbReference type="Pfam" id="PF00359">
    <property type="entry name" value="PTS_EIIA_2"/>
    <property type="match status" value="1"/>
</dbReference>
<dbReference type="SUPFAM" id="SSF55804">
    <property type="entry name" value="Phoshotransferase/anion transport protein"/>
    <property type="match status" value="1"/>
</dbReference>
<dbReference type="PROSITE" id="PS51094">
    <property type="entry name" value="PTS_EIIA_TYPE_2"/>
    <property type="match status" value="1"/>
</dbReference>
<dbReference type="PROSITE" id="PS00372">
    <property type="entry name" value="PTS_EIIA_TYPE_2_HIS"/>
    <property type="match status" value="1"/>
</dbReference>
<comment type="function">
    <text evidence="3">The phosphoenolpyruvate-dependent sugar phosphotransferase system (sugar PTS), a major carbohydrate active transport system, catalyzes the phosphorylation of incoming sugar substrates concomitantly with their translocation across the cell membrane. The enzyme II CmtAB PTS system is involved in D-mannitol transport.</text>
</comment>
<comment type="subunit">
    <text evidence="3">Homodimer or homotrimer. Seems to be a monomer when not phosphorylated.</text>
</comment>
<comment type="subcellular location">
    <subcellularLocation>
        <location evidence="5">Cytoplasm</location>
    </subcellularLocation>
</comment>
<comment type="domain">
    <text evidence="4">The PTS EIIA type-2 domain is phosphorylated by phospho-HPr on a histidyl residue. Then, it transfers the phosphoryl group to the PTS EIIB type-2 domain.</text>
</comment>
<gene>
    <name type="primary">mtlF</name>
    <name type="synonym">mtlA</name>
    <name type="ordered locus">SACOL2148</name>
</gene>
<evidence type="ECO:0000250" key="1"/>
<evidence type="ECO:0000250" key="2">
    <source>
        <dbReference type="UniProtKB" id="P00550"/>
    </source>
</evidence>
<evidence type="ECO:0000250" key="3">
    <source>
        <dbReference type="UniProtKB" id="P0A0E0"/>
    </source>
</evidence>
<evidence type="ECO:0000255" key="4">
    <source>
        <dbReference type="PROSITE-ProRule" id="PRU00417"/>
    </source>
</evidence>
<evidence type="ECO:0000305" key="5"/>
<reference key="1">
    <citation type="submission" date="1999-09" db="EMBL/GenBank/DDBJ databases">
        <title>Transcriptional analysis of arginase gene cluster in Staphylococcus aureus.</title>
        <authorList>
            <person name="Wu S.W."/>
            <person name="de Lencastre H."/>
            <person name="Tomasz A."/>
        </authorList>
    </citation>
    <scope>NUCLEOTIDE SEQUENCE [GENOMIC DNA]</scope>
</reference>
<reference key="2">
    <citation type="journal article" date="2005" name="J. Bacteriol.">
        <title>Insights on evolution of virulence and resistance from the complete genome analysis of an early methicillin-resistant Staphylococcus aureus strain and a biofilm-producing methicillin-resistant Staphylococcus epidermidis strain.</title>
        <authorList>
            <person name="Gill S.R."/>
            <person name="Fouts D.E."/>
            <person name="Archer G.L."/>
            <person name="Mongodin E.F."/>
            <person name="DeBoy R.T."/>
            <person name="Ravel J."/>
            <person name="Paulsen I.T."/>
            <person name="Kolonay J.F."/>
            <person name="Brinkac L.M."/>
            <person name="Beanan M.J."/>
            <person name="Dodson R.J."/>
            <person name="Daugherty S.C."/>
            <person name="Madupu R."/>
            <person name="Angiuoli S.V."/>
            <person name="Durkin A.S."/>
            <person name="Haft D.H."/>
            <person name="Vamathevan J.J."/>
            <person name="Khouri H."/>
            <person name="Utterback T.R."/>
            <person name="Lee C."/>
            <person name="Dimitrov G."/>
            <person name="Jiang L."/>
            <person name="Qin H."/>
            <person name="Weidman J."/>
            <person name="Tran K."/>
            <person name="Kang K.H."/>
            <person name="Hance I.R."/>
            <person name="Nelson K.E."/>
            <person name="Fraser C.M."/>
        </authorList>
    </citation>
    <scope>NUCLEOTIDE SEQUENCE [LARGE SCALE GENOMIC DNA]</scope>
    <source>
        <strain>COL</strain>
    </source>
</reference>
<proteinExistence type="inferred from homology"/>
<name>PTMA_STAAC</name>
<feature type="initiator methionine" description="Removed" evidence="1">
    <location>
        <position position="1"/>
    </location>
</feature>
<feature type="chain" id="PRO_0000186636" description="Mannitol-specific phosphotransferase enzyme IIA component">
    <location>
        <begin position="2"/>
        <end position="144"/>
    </location>
</feature>
<feature type="domain" description="PTS EIIA type-2" evidence="4">
    <location>
        <begin position="3"/>
        <end position="142"/>
    </location>
</feature>
<feature type="active site" description="Tele-phosphohistidine intermediate" evidence="3 4">
    <location>
        <position position="63"/>
    </location>
</feature>
<feature type="modified residue" description="Phosphohistidine; by HPr" evidence="2 3">
    <location>
        <position position="63"/>
    </location>
</feature>
<protein>
    <recommendedName>
        <fullName evidence="3">Mannitol-specific phosphotransferase enzyme IIA component</fullName>
    </recommendedName>
    <alternativeName>
        <fullName evidence="3">EIIA</fullName>
    </alternativeName>
    <alternativeName>
        <fullName evidence="3">EIII</fullName>
    </alternativeName>
    <alternativeName>
        <fullName evidence="3">PTS system mannitol-specific EIIA component</fullName>
    </alternativeName>
</protein>
<sequence>MSELFSNDNIFLNVNVNSQNEAIEKAGKALVDSGAVTDAYIQAMKDREQVVSTFMGNGLAIPHGTDEAKTNVIHSGLTLLQIPEGVDWDGEVVKVVVGIAGKDGEHLDLLSKIAITFSEEENVDRIVQAKSAEEIKQVFEEADA</sequence>
<keyword id="KW-0963">Cytoplasm</keyword>
<keyword id="KW-0418">Kinase</keyword>
<keyword id="KW-0597">Phosphoprotein</keyword>
<keyword id="KW-0598">Phosphotransferase system</keyword>
<keyword id="KW-0762">Sugar transport</keyword>
<keyword id="KW-0808">Transferase</keyword>
<keyword id="KW-0813">Transport</keyword>
<organism>
    <name type="scientific">Staphylococcus aureus (strain COL)</name>
    <dbReference type="NCBI Taxonomy" id="93062"/>
    <lineage>
        <taxon>Bacteria</taxon>
        <taxon>Bacillati</taxon>
        <taxon>Bacillota</taxon>
        <taxon>Bacilli</taxon>
        <taxon>Bacillales</taxon>
        <taxon>Staphylococcaceae</taxon>
        <taxon>Staphylococcus</taxon>
    </lineage>
</organism>
<accession>Q5HE46</accession>